<reference key="1">
    <citation type="journal article" date="2006" name="J. Bacteriol.">
        <title>Comparative genomic evidence for a close relationship between the dimorphic prosthecate bacteria Hyphomonas neptunium and Caulobacter crescentus.</title>
        <authorList>
            <person name="Badger J.H."/>
            <person name="Hoover T.R."/>
            <person name="Brun Y.V."/>
            <person name="Weiner R.M."/>
            <person name="Laub M.T."/>
            <person name="Alexandre G."/>
            <person name="Mrazek J."/>
            <person name="Ren Q."/>
            <person name="Paulsen I.T."/>
            <person name="Nelson K.E."/>
            <person name="Khouri H.M."/>
            <person name="Radune D."/>
            <person name="Sosa J."/>
            <person name="Dodson R.J."/>
            <person name="Sullivan S.A."/>
            <person name="Rosovitz M.J."/>
            <person name="Madupu R."/>
            <person name="Brinkac L.M."/>
            <person name="Durkin A.S."/>
            <person name="Daugherty S.C."/>
            <person name="Kothari S.P."/>
            <person name="Giglio M.G."/>
            <person name="Zhou L."/>
            <person name="Haft D.H."/>
            <person name="Selengut J.D."/>
            <person name="Davidsen T.M."/>
            <person name="Yang Q."/>
            <person name="Zafar N."/>
            <person name="Ward N.L."/>
        </authorList>
    </citation>
    <scope>NUCLEOTIDE SEQUENCE [LARGE SCALE GENOMIC DNA]</scope>
    <source>
        <strain>ATCC 15444</strain>
    </source>
</reference>
<organism>
    <name type="scientific">Hyphomonas neptunium (strain ATCC 15444)</name>
    <dbReference type="NCBI Taxonomy" id="228405"/>
    <lineage>
        <taxon>Bacteria</taxon>
        <taxon>Pseudomonadati</taxon>
        <taxon>Pseudomonadota</taxon>
        <taxon>Alphaproteobacteria</taxon>
        <taxon>Hyphomonadales</taxon>
        <taxon>Hyphomonadaceae</taxon>
        <taxon>Hyphomonas</taxon>
    </lineage>
</organism>
<evidence type="ECO:0000255" key="1">
    <source>
        <dbReference type="HAMAP-Rule" id="MF_01322"/>
    </source>
</evidence>
<proteinExistence type="inferred from homology"/>
<protein>
    <recommendedName>
        <fullName evidence="1">DNA-directed RNA polymerase subunit beta'</fullName>
        <shortName evidence="1">RNAP subunit beta'</shortName>
        <ecNumber evidence="1">2.7.7.6</ecNumber>
    </recommendedName>
    <alternativeName>
        <fullName evidence="1">RNA polymerase subunit beta'</fullName>
    </alternativeName>
    <alternativeName>
        <fullName evidence="1">Transcriptase subunit beta'</fullName>
    </alternativeName>
</protein>
<sequence>MRQDVANMFNQNAPAPSFEAIRISIASPEKIRSWSSGEIKKPETINYRTFKPERDGLFCARIFGPTKDYECLCGKYKRIKYRGIVCEKCGVEVTLARVRRERMGHIDLAAPVAHIWFLKSLPSRISTLVDMPLKDVERVLYFESYVVIEPGLTELEPLQLLTEEEYMDAQDRLGEDAFTALIGAEAIREILKSLDLPTLAETLREELRESSSELKTKKYSKRLKVVDSFIQSKAKPEWMILTVVPVIPPDLRPLVPLDGGRFATSDLNDLYRRVINRNNRLKRLMELRAPDIIIRNEKRMLQESVDALFDNGRRGRTITGTNKRPLKSISDMLKGKQGRFRQNLLGKRVDYSGRSVIVVGPNLKLHECGLPKKMALELFKPFIYARLDAKGLAGTVKAAKKLVEKEKPEVWDILDEVIREHPVLLNRAPTLHRLGIQAFEPKLIEGKAIQLHPLVCAAFNADFDGDQMAVHVPLSLEAQLECRVLMMSTNNILSPANGKPIIVPSQDIILGLYYLSLDRKGEIGEGMVFADLAEIEHALDAGLVSLHSKVRALYDGVDSDGKPERRIIDTTPGRYMVANILPRSKAIGPELVNTVLSKKAIGKIIDEVYRLCGQKATVIFCDKMMELGFREACKAGISFGKDDMVIPEAKKRLVDATKDLVSDYERQYADGLITRGEKYNKVVDAWSSCTDKVADAMMESAAKMQVSRGKEQVNSIFMMADSGARGSKNQMKQLAGMRGLMAKPSGEIIETPIISNFKEGLTVLEYFNSTHGARKGLADTALKTANSGYLTRRLVDVAQDCIINEDDCGTEKGIDINAVMEGADVVVSLNERILGRVIAEDIKGPDGKLVVPANTYVDEDVAALIDTATVDRVKVRSPLTCETKNGICAQCYGRDLARGTLVNRGEAVGVIAAQSIGEPGTQLTMRTFHIGGAAQVADQSSLEASFEGTVRFTDAEIVTRKDKTIVVVGRRMQVEIVDADGRTRQSFRPAYGTRLMAKDGDKVMPGKLLADWDPFAQPIVSEVAGEARFIDLSEGTTVREETDEATGISARVVVDPRSTSKTADLKPSIQIVDASGKPVKLPNGSPATYVLSVGAILSVSDGDRIEPGDTLSRVATGGAKTKDITGGLPRVAELFEARRPKDHAIIAEVDGRVEYGRDYKNKRKVTIVPTEEGREPIDYLVPKGKHLAVQDGDFIKRGEYLMDGNPAPQDILSTLGVEALANYLTDEVQKVYRLQGVPINDKHIEVIVRQMLQKVEITDGGDTVFITGEHIDAIEFDEANEAIRKSRKKDQREATANPLLLGITKASLQTRSFISAASFQETTRVLTEAAIQGKIDTLDGLKENVIVGRLIPAGTGGGIRQFRRVAAERDLKLKAKRAAAMAKAEEGINLVSLPAPERDTAE</sequence>
<accession>Q0BYA8</accession>
<comment type="function">
    <text evidence="1">DNA-dependent RNA polymerase catalyzes the transcription of DNA into RNA using the four ribonucleoside triphosphates as substrates.</text>
</comment>
<comment type="catalytic activity">
    <reaction evidence="1">
        <text>RNA(n) + a ribonucleoside 5'-triphosphate = RNA(n+1) + diphosphate</text>
        <dbReference type="Rhea" id="RHEA:21248"/>
        <dbReference type="Rhea" id="RHEA-COMP:14527"/>
        <dbReference type="Rhea" id="RHEA-COMP:17342"/>
        <dbReference type="ChEBI" id="CHEBI:33019"/>
        <dbReference type="ChEBI" id="CHEBI:61557"/>
        <dbReference type="ChEBI" id="CHEBI:140395"/>
        <dbReference type="EC" id="2.7.7.6"/>
    </reaction>
</comment>
<comment type="cofactor">
    <cofactor evidence="1">
        <name>Mg(2+)</name>
        <dbReference type="ChEBI" id="CHEBI:18420"/>
    </cofactor>
    <text evidence="1">Binds 1 Mg(2+) ion per subunit.</text>
</comment>
<comment type="cofactor">
    <cofactor evidence="1">
        <name>Zn(2+)</name>
        <dbReference type="ChEBI" id="CHEBI:29105"/>
    </cofactor>
    <text evidence="1">Binds 2 Zn(2+) ions per subunit.</text>
</comment>
<comment type="subunit">
    <text evidence="1">The RNAP catalytic core consists of 2 alpha, 1 beta, 1 beta' and 1 omega subunit. When a sigma factor is associated with the core the holoenzyme is formed, which can initiate transcription.</text>
</comment>
<comment type="similarity">
    <text evidence="1">Belongs to the RNA polymerase beta' chain family.</text>
</comment>
<feature type="chain" id="PRO_0000353383" description="DNA-directed RNA polymerase subunit beta'">
    <location>
        <begin position="1"/>
        <end position="1402"/>
    </location>
</feature>
<feature type="binding site" evidence="1">
    <location>
        <position position="71"/>
    </location>
    <ligand>
        <name>Zn(2+)</name>
        <dbReference type="ChEBI" id="CHEBI:29105"/>
        <label>1</label>
    </ligand>
</feature>
<feature type="binding site" evidence="1">
    <location>
        <position position="73"/>
    </location>
    <ligand>
        <name>Zn(2+)</name>
        <dbReference type="ChEBI" id="CHEBI:29105"/>
        <label>1</label>
    </ligand>
</feature>
<feature type="binding site" evidence="1">
    <location>
        <position position="86"/>
    </location>
    <ligand>
        <name>Zn(2+)</name>
        <dbReference type="ChEBI" id="CHEBI:29105"/>
        <label>1</label>
    </ligand>
</feature>
<feature type="binding site" evidence="1">
    <location>
        <position position="89"/>
    </location>
    <ligand>
        <name>Zn(2+)</name>
        <dbReference type="ChEBI" id="CHEBI:29105"/>
        <label>1</label>
    </ligand>
</feature>
<feature type="binding site" evidence="1">
    <location>
        <position position="462"/>
    </location>
    <ligand>
        <name>Mg(2+)</name>
        <dbReference type="ChEBI" id="CHEBI:18420"/>
    </ligand>
</feature>
<feature type="binding site" evidence="1">
    <location>
        <position position="464"/>
    </location>
    <ligand>
        <name>Mg(2+)</name>
        <dbReference type="ChEBI" id="CHEBI:18420"/>
    </ligand>
</feature>
<feature type="binding site" evidence="1">
    <location>
        <position position="466"/>
    </location>
    <ligand>
        <name>Mg(2+)</name>
        <dbReference type="ChEBI" id="CHEBI:18420"/>
    </ligand>
</feature>
<feature type="binding site" evidence="1">
    <location>
        <position position="808"/>
    </location>
    <ligand>
        <name>Zn(2+)</name>
        <dbReference type="ChEBI" id="CHEBI:29105"/>
        <label>2</label>
    </ligand>
</feature>
<feature type="binding site" evidence="1">
    <location>
        <position position="881"/>
    </location>
    <ligand>
        <name>Zn(2+)</name>
        <dbReference type="ChEBI" id="CHEBI:29105"/>
        <label>2</label>
    </ligand>
</feature>
<feature type="binding site" evidence="1">
    <location>
        <position position="888"/>
    </location>
    <ligand>
        <name>Zn(2+)</name>
        <dbReference type="ChEBI" id="CHEBI:29105"/>
        <label>2</label>
    </ligand>
</feature>
<feature type="binding site" evidence="1">
    <location>
        <position position="891"/>
    </location>
    <ligand>
        <name>Zn(2+)</name>
        <dbReference type="ChEBI" id="CHEBI:29105"/>
        <label>2</label>
    </ligand>
</feature>
<dbReference type="EC" id="2.7.7.6" evidence="1"/>
<dbReference type="EMBL" id="CP000158">
    <property type="protein sequence ID" value="ABI76613.1"/>
    <property type="molecule type" value="Genomic_DNA"/>
</dbReference>
<dbReference type="RefSeq" id="WP_011647832.1">
    <property type="nucleotide sequence ID" value="NC_008358.1"/>
</dbReference>
<dbReference type="SMR" id="Q0BYA8"/>
<dbReference type="STRING" id="228405.HNE_2857"/>
<dbReference type="KEGG" id="hne:HNE_2857"/>
<dbReference type="eggNOG" id="COG0086">
    <property type="taxonomic scope" value="Bacteria"/>
</dbReference>
<dbReference type="HOGENOM" id="CLU_000524_3_1_5"/>
<dbReference type="Proteomes" id="UP000001959">
    <property type="component" value="Chromosome"/>
</dbReference>
<dbReference type="GO" id="GO:0000428">
    <property type="term" value="C:DNA-directed RNA polymerase complex"/>
    <property type="evidence" value="ECO:0007669"/>
    <property type="project" value="UniProtKB-KW"/>
</dbReference>
<dbReference type="GO" id="GO:0003677">
    <property type="term" value="F:DNA binding"/>
    <property type="evidence" value="ECO:0007669"/>
    <property type="project" value="UniProtKB-UniRule"/>
</dbReference>
<dbReference type="GO" id="GO:0003899">
    <property type="term" value="F:DNA-directed RNA polymerase activity"/>
    <property type="evidence" value="ECO:0007669"/>
    <property type="project" value="UniProtKB-UniRule"/>
</dbReference>
<dbReference type="GO" id="GO:0000287">
    <property type="term" value="F:magnesium ion binding"/>
    <property type="evidence" value="ECO:0007669"/>
    <property type="project" value="UniProtKB-UniRule"/>
</dbReference>
<dbReference type="GO" id="GO:0008270">
    <property type="term" value="F:zinc ion binding"/>
    <property type="evidence" value="ECO:0007669"/>
    <property type="project" value="UniProtKB-UniRule"/>
</dbReference>
<dbReference type="GO" id="GO:0006351">
    <property type="term" value="P:DNA-templated transcription"/>
    <property type="evidence" value="ECO:0007669"/>
    <property type="project" value="UniProtKB-UniRule"/>
</dbReference>
<dbReference type="CDD" id="cd02655">
    <property type="entry name" value="RNAP_beta'_C"/>
    <property type="match status" value="1"/>
</dbReference>
<dbReference type="CDD" id="cd01609">
    <property type="entry name" value="RNAP_beta'_N"/>
    <property type="match status" value="1"/>
</dbReference>
<dbReference type="Gene3D" id="1.10.132.30">
    <property type="match status" value="1"/>
</dbReference>
<dbReference type="Gene3D" id="1.10.150.390">
    <property type="match status" value="1"/>
</dbReference>
<dbReference type="Gene3D" id="1.10.1790.20">
    <property type="match status" value="1"/>
</dbReference>
<dbReference type="Gene3D" id="1.10.40.90">
    <property type="match status" value="1"/>
</dbReference>
<dbReference type="Gene3D" id="2.40.40.20">
    <property type="match status" value="1"/>
</dbReference>
<dbReference type="Gene3D" id="2.40.50.100">
    <property type="match status" value="3"/>
</dbReference>
<dbReference type="Gene3D" id="4.10.860.120">
    <property type="entry name" value="RNA polymerase II, clamp domain"/>
    <property type="match status" value="1"/>
</dbReference>
<dbReference type="Gene3D" id="1.10.274.100">
    <property type="entry name" value="RNA polymerase Rpb1, domain 3"/>
    <property type="match status" value="2"/>
</dbReference>
<dbReference type="HAMAP" id="MF_01322">
    <property type="entry name" value="RNApol_bact_RpoC"/>
    <property type="match status" value="1"/>
</dbReference>
<dbReference type="InterPro" id="IPR045867">
    <property type="entry name" value="DNA-dir_RpoC_beta_prime"/>
</dbReference>
<dbReference type="InterPro" id="IPR012754">
    <property type="entry name" value="DNA-dir_RpoC_beta_prime_bact"/>
</dbReference>
<dbReference type="InterPro" id="IPR000722">
    <property type="entry name" value="RNA_pol_asu"/>
</dbReference>
<dbReference type="InterPro" id="IPR006592">
    <property type="entry name" value="RNA_pol_N"/>
</dbReference>
<dbReference type="InterPro" id="IPR007080">
    <property type="entry name" value="RNA_pol_Rpb1_1"/>
</dbReference>
<dbReference type="InterPro" id="IPR007066">
    <property type="entry name" value="RNA_pol_Rpb1_3"/>
</dbReference>
<dbReference type="InterPro" id="IPR042102">
    <property type="entry name" value="RNA_pol_Rpb1_3_sf"/>
</dbReference>
<dbReference type="InterPro" id="IPR007083">
    <property type="entry name" value="RNA_pol_Rpb1_4"/>
</dbReference>
<dbReference type="InterPro" id="IPR007081">
    <property type="entry name" value="RNA_pol_Rpb1_5"/>
</dbReference>
<dbReference type="InterPro" id="IPR044893">
    <property type="entry name" value="RNA_pol_Rpb1_clamp_domain"/>
</dbReference>
<dbReference type="InterPro" id="IPR038120">
    <property type="entry name" value="Rpb1_funnel_sf"/>
</dbReference>
<dbReference type="NCBIfam" id="TIGR02386">
    <property type="entry name" value="rpoC_TIGR"/>
    <property type="match status" value="1"/>
</dbReference>
<dbReference type="PANTHER" id="PTHR19376">
    <property type="entry name" value="DNA-DIRECTED RNA POLYMERASE"/>
    <property type="match status" value="1"/>
</dbReference>
<dbReference type="PANTHER" id="PTHR19376:SF54">
    <property type="entry name" value="DNA-DIRECTED RNA POLYMERASE SUBUNIT BETA"/>
    <property type="match status" value="1"/>
</dbReference>
<dbReference type="Pfam" id="PF04997">
    <property type="entry name" value="RNA_pol_Rpb1_1"/>
    <property type="match status" value="1"/>
</dbReference>
<dbReference type="Pfam" id="PF00623">
    <property type="entry name" value="RNA_pol_Rpb1_2"/>
    <property type="match status" value="1"/>
</dbReference>
<dbReference type="Pfam" id="PF04983">
    <property type="entry name" value="RNA_pol_Rpb1_3"/>
    <property type="match status" value="1"/>
</dbReference>
<dbReference type="Pfam" id="PF05000">
    <property type="entry name" value="RNA_pol_Rpb1_4"/>
    <property type="match status" value="1"/>
</dbReference>
<dbReference type="Pfam" id="PF04998">
    <property type="entry name" value="RNA_pol_Rpb1_5"/>
    <property type="match status" value="1"/>
</dbReference>
<dbReference type="SMART" id="SM00663">
    <property type="entry name" value="RPOLA_N"/>
    <property type="match status" value="1"/>
</dbReference>
<dbReference type="SUPFAM" id="SSF64484">
    <property type="entry name" value="beta and beta-prime subunits of DNA dependent RNA-polymerase"/>
    <property type="match status" value="1"/>
</dbReference>
<keyword id="KW-0240">DNA-directed RNA polymerase</keyword>
<keyword id="KW-0460">Magnesium</keyword>
<keyword id="KW-0479">Metal-binding</keyword>
<keyword id="KW-0548">Nucleotidyltransferase</keyword>
<keyword id="KW-1185">Reference proteome</keyword>
<keyword id="KW-0804">Transcription</keyword>
<keyword id="KW-0808">Transferase</keyword>
<keyword id="KW-0862">Zinc</keyword>
<gene>
    <name evidence="1" type="primary">rpoC</name>
    <name type="ordered locus">HNE_2857</name>
</gene>
<name>RPOC_HYPNA</name>